<feature type="chain" id="PRO_0000191062" description="Solute carrier organic anion transporter family member 2B1">
    <location>
        <begin position="1"/>
        <end position="683"/>
    </location>
</feature>
<feature type="topological domain" description="Cytoplasmic" evidence="3">
    <location>
        <begin position="1"/>
        <end position="41"/>
    </location>
</feature>
<feature type="transmembrane region" description="Helical; Name=1" evidence="3">
    <location>
        <begin position="42"/>
        <end position="61"/>
    </location>
</feature>
<feature type="topological domain" description="Extracellular" evidence="3">
    <location>
        <begin position="62"/>
        <end position="80"/>
    </location>
</feature>
<feature type="transmembrane region" description="Helical; Name=2" evidence="3">
    <location>
        <begin position="81"/>
        <end position="101"/>
    </location>
</feature>
<feature type="topological domain" description="Cytoplasmic" evidence="3">
    <location>
        <begin position="102"/>
        <end position="107"/>
    </location>
</feature>
<feature type="transmembrane region" description="Helical; Name=3" evidence="3">
    <location>
        <begin position="108"/>
        <end position="132"/>
    </location>
</feature>
<feature type="topological domain" description="Extracellular" evidence="3">
    <location>
        <begin position="133"/>
        <end position="177"/>
    </location>
</feature>
<feature type="transmembrane region" description="Helical; Name=4" evidence="3">
    <location>
        <begin position="178"/>
        <end position="207"/>
    </location>
</feature>
<feature type="topological domain" description="Cytoplasmic" evidence="3">
    <location>
        <begin position="208"/>
        <end position="226"/>
    </location>
</feature>
<feature type="transmembrane region" description="Helical; Name=5" evidence="3">
    <location>
        <begin position="227"/>
        <end position="247"/>
    </location>
</feature>
<feature type="topological domain" description="Extracellular" evidence="3">
    <location>
        <begin position="248"/>
        <end position="265"/>
    </location>
</feature>
<feature type="transmembrane region" description="Helical; Name=6" evidence="3">
    <location>
        <begin position="266"/>
        <end position="290"/>
    </location>
</feature>
<feature type="topological domain" description="Cytoplasmic" evidence="3">
    <location>
        <begin position="291"/>
        <end position="355"/>
    </location>
</feature>
<feature type="transmembrane region" description="Helical; Name=7" evidence="3">
    <location>
        <begin position="356"/>
        <end position="377"/>
    </location>
</feature>
<feature type="topological domain" description="Extracellular" evidence="3">
    <location>
        <begin position="378"/>
        <end position="397"/>
    </location>
</feature>
<feature type="transmembrane region" description="Helical; Name=8" evidence="3">
    <location>
        <begin position="398"/>
        <end position="421"/>
    </location>
</feature>
<feature type="topological domain" description="Cytoplasmic" evidence="3">
    <location>
        <begin position="422"/>
        <end position="425"/>
    </location>
</feature>
<feature type="transmembrane region" description="Helical; Name=9" evidence="3">
    <location>
        <begin position="426"/>
        <end position="449"/>
    </location>
</feature>
<feature type="topological domain" description="Extracellular" evidence="3">
    <location>
        <begin position="450"/>
        <end position="553"/>
    </location>
</feature>
<feature type="transmembrane region" description="Helical; Name=10" evidence="3">
    <location>
        <begin position="554"/>
        <end position="576"/>
    </location>
</feature>
<feature type="topological domain" description="Cytoplasmic" evidence="3">
    <location>
        <begin position="577"/>
        <end position="585"/>
    </location>
</feature>
<feature type="transmembrane region" description="Helical; Name=11" evidence="3">
    <location>
        <begin position="586"/>
        <end position="611"/>
    </location>
</feature>
<feature type="topological domain" description="Extracellular" evidence="3">
    <location>
        <begin position="612"/>
        <end position="644"/>
    </location>
</feature>
<feature type="transmembrane region" description="Helical; Name=12" evidence="3">
    <location>
        <begin position="645"/>
        <end position="662"/>
    </location>
</feature>
<feature type="topological domain" description="Cytoplasmic" evidence="3">
    <location>
        <begin position="663"/>
        <end position="683"/>
    </location>
</feature>
<feature type="domain" description="Kazal-like" evidence="4">
    <location>
        <begin position="472"/>
        <end position="532"/>
    </location>
</feature>
<feature type="region of interest" description="Disordered" evidence="5">
    <location>
        <begin position="1"/>
        <end position="30"/>
    </location>
</feature>
<feature type="compositionally biased region" description="Basic and acidic residues" evidence="5">
    <location>
        <begin position="13"/>
        <end position="30"/>
    </location>
</feature>
<feature type="modified residue" description="Phosphoserine" evidence="13 14">
    <location>
        <position position="21"/>
    </location>
</feature>
<feature type="modified residue" description="Phosphoserine" evidence="1">
    <location>
        <position position="312"/>
    </location>
</feature>
<feature type="modified residue" description="Phosphoserine" evidence="2">
    <location>
        <position position="315"/>
    </location>
</feature>
<feature type="glycosylation site" description="N-linked (GlcNAc...) asparagine" evidence="3">
    <location>
        <position position="143"/>
    </location>
</feature>
<feature type="glycosylation site" description="N-linked (GlcNAc...) asparagine" evidence="3">
    <location>
        <position position="166"/>
    </location>
</feature>
<feature type="glycosylation site" description="N-linked (GlcNAc...) asparagine" evidence="3">
    <location>
        <position position="527"/>
    </location>
</feature>
<feature type="glycosylation site" description="N-linked (GlcNAc...) asparagine" evidence="3">
    <location>
        <position position="534"/>
    </location>
</feature>
<feature type="disulfide bond" evidence="4">
    <location>
        <begin position="478"/>
        <end position="509"/>
    </location>
</feature>
<feature type="disulfide bond" evidence="4">
    <location>
        <begin position="484"/>
        <end position="505"/>
    </location>
</feature>
<feature type="disulfide bond" evidence="4">
    <location>
        <begin position="493"/>
        <end position="530"/>
    </location>
</feature>
<organism>
    <name type="scientific">Mus musculus</name>
    <name type="common">Mouse</name>
    <dbReference type="NCBI Taxonomy" id="10090"/>
    <lineage>
        <taxon>Eukaryota</taxon>
        <taxon>Metazoa</taxon>
        <taxon>Chordata</taxon>
        <taxon>Craniata</taxon>
        <taxon>Vertebrata</taxon>
        <taxon>Euteleostomi</taxon>
        <taxon>Mammalia</taxon>
        <taxon>Eutheria</taxon>
        <taxon>Euarchontoglires</taxon>
        <taxon>Glires</taxon>
        <taxon>Rodentia</taxon>
        <taxon>Myomorpha</taxon>
        <taxon>Muroidea</taxon>
        <taxon>Muridae</taxon>
        <taxon>Murinae</taxon>
        <taxon>Mus</taxon>
        <taxon>Mus</taxon>
    </lineage>
</organism>
<protein>
    <recommendedName>
        <fullName>Solute carrier organic anion transporter family member 2B1</fullName>
    </recommendedName>
    <alternativeName>
        <fullName evidence="9">Organic anion transporting polypeptide 2B1</fullName>
        <shortName evidence="9">OATP2B1</shortName>
    </alternativeName>
    <alternativeName>
        <fullName evidence="1">Solute carrier family 21 member 9</fullName>
    </alternativeName>
</protein>
<evidence type="ECO:0000250" key="1">
    <source>
        <dbReference type="UniProtKB" id="O94956"/>
    </source>
</evidence>
<evidence type="ECO:0000250" key="2">
    <source>
        <dbReference type="UniProtKB" id="Q9JHI3"/>
    </source>
</evidence>
<evidence type="ECO:0000255" key="3"/>
<evidence type="ECO:0000255" key="4">
    <source>
        <dbReference type="PROSITE-ProRule" id="PRU00798"/>
    </source>
</evidence>
<evidence type="ECO:0000256" key="5">
    <source>
        <dbReference type="SAM" id="MobiDB-lite"/>
    </source>
</evidence>
<evidence type="ECO:0000269" key="6">
    <source>
    </source>
</evidence>
<evidence type="ECO:0000269" key="7">
    <source>
    </source>
</evidence>
<evidence type="ECO:0000269" key="8">
    <source>
    </source>
</evidence>
<evidence type="ECO:0000303" key="9">
    <source>
    </source>
</evidence>
<evidence type="ECO:0000305" key="10"/>
<evidence type="ECO:0000305" key="11">
    <source>
    </source>
</evidence>
<evidence type="ECO:0000312" key="12">
    <source>
        <dbReference type="MGI" id="MGI:1351872"/>
    </source>
</evidence>
<evidence type="ECO:0007744" key="13">
    <source>
    </source>
</evidence>
<evidence type="ECO:0007744" key="14">
    <source>
    </source>
</evidence>
<name>SO2B1_MOUSE</name>
<accession>Q8BXB6</accession>
<accession>Q8BLV8</accession>
<reference key="1">
    <citation type="journal article" date="2005" name="Science">
        <title>The transcriptional landscape of the mammalian genome.</title>
        <authorList>
            <person name="Carninci P."/>
            <person name="Kasukawa T."/>
            <person name="Katayama S."/>
            <person name="Gough J."/>
            <person name="Frith M.C."/>
            <person name="Maeda N."/>
            <person name="Oyama R."/>
            <person name="Ravasi T."/>
            <person name="Lenhard B."/>
            <person name="Wells C."/>
            <person name="Kodzius R."/>
            <person name="Shimokawa K."/>
            <person name="Bajic V.B."/>
            <person name="Brenner S.E."/>
            <person name="Batalov S."/>
            <person name="Forrest A.R."/>
            <person name="Zavolan M."/>
            <person name="Davis M.J."/>
            <person name="Wilming L.G."/>
            <person name="Aidinis V."/>
            <person name="Allen J.E."/>
            <person name="Ambesi-Impiombato A."/>
            <person name="Apweiler R."/>
            <person name="Aturaliya R.N."/>
            <person name="Bailey T.L."/>
            <person name="Bansal M."/>
            <person name="Baxter L."/>
            <person name="Beisel K.W."/>
            <person name="Bersano T."/>
            <person name="Bono H."/>
            <person name="Chalk A.M."/>
            <person name="Chiu K.P."/>
            <person name="Choudhary V."/>
            <person name="Christoffels A."/>
            <person name="Clutterbuck D.R."/>
            <person name="Crowe M.L."/>
            <person name="Dalla E."/>
            <person name="Dalrymple B.P."/>
            <person name="de Bono B."/>
            <person name="Della Gatta G."/>
            <person name="di Bernardo D."/>
            <person name="Down T."/>
            <person name="Engstrom P."/>
            <person name="Fagiolini M."/>
            <person name="Faulkner G."/>
            <person name="Fletcher C.F."/>
            <person name="Fukushima T."/>
            <person name="Furuno M."/>
            <person name="Futaki S."/>
            <person name="Gariboldi M."/>
            <person name="Georgii-Hemming P."/>
            <person name="Gingeras T.R."/>
            <person name="Gojobori T."/>
            <person name="Green R.E."/>
            <person name="Gustincich S."/>
            <person name="Harbers M."/>
            <person name="Hayashi Y."/>
            <person name="Hensch T.K."/>
            <person name="Hirokawa N."/>
            <person name="Hill D."/>
            <person name="Huminiecki L."/>
            <person name="Iacono M."/>
            <person name="Ikeo K."/>
            <person name="Iwama A."/>
            <person name="Ishikawa T."/>
            <person name="Jakt M."/>
            <person name="Kanapin A."/>
            <person name="Katoh M."/>
            <person name="Kawasawa Y."/>
            <person name="Kelso J."/>
            <person name="Kitamura H."/>
            <person name="Kitano H."/>
            <person name="Kollias G."/>
            <person name="Krishnan S.P."/>
            <person name="Kruger A."/>
            <person name="Kummerfeld S.K."/>
            <person name="Kurochkin I.V."/>
            <person name="Lareau L.F."/>
            <person name="Lazarevic D."/>
            <person name="Lipovich L."/>
            <person name="Liu J."/>
            <person name="Liuni S."/>
            <person name="McWilliam S."/>
            <person name="Madan Babu M."/>
            <person name="Madera M."/>
            <person name="Marchionni L."/>
            <person name="Matsuda H."/>
            <person name="Matsuzawa S."/>
            <person name="Miki H."/>
            <person name="Mignone F."/>
            <person name="Miyake S."/>
            <person name="Morris K."/>
            <person name="Mottagui-Tabar S."/>
            <person name="Mulder N."/>
            <person name="Nakano N."/>
            <person name="Nakauchi H."/>
            <person name="Ng P."/>
            <person name="Nilsson R."/>
            <person name="Nishiguchi S."/>
            <person name="Nishikawa S."/>
            <person name="Nori F."/>
            <person name="Ohara O."/>
            <person name="Okazaki Y."/>
            <person name="Orlando V."/>
            <person name="Pang K.C."/>
            <person name="Pavan W.J."/>
            <person name="Pavesi G."/>
            <person name="Pesole G."/>
            <person name="Petrovsky N."/>
            <person name="Piazza S."/>
            <person name="Reed J."/>
            <person name="Reid J.F."/>
            <person name="Ring B.Z."/>
            <person name="Ringwald M."/>
            <person name="Rost B."/>
            <person name="Ruan Y."/>
            <person name="Salzberg S.L."/>
            <person name="Sandelin A."/>
            <person name="Schneider C."/>
            <person name="Schoenbach C."/>
            <person name="Sekiguchi K."/>
            <person name="Semple C.A."/>
            <person name="Seno S."/>
            <person name="Sessa L."/>
            <person name="Sheng Y."/>
            <person name="Shibata Y."/>
            <person name="Shimada H."/>
            <person name="Shimada K."/>
            <person name="Silva D."/>
            <person name="Sinclair B."/>
            <person name="Sperling S."/>
            <person name="Stupka E."/>
            <person name="Sugiura K."/>
            <person name="Sultana R."/>
            <person name="Takenaka Y."/>
            <person name="Taki K."/>
            <person name="Tammoja K."/>
            <person name="Tan S.L."/>
            <person name="Tang S."/>
            <person name="Taylor M.S."/>
            <person name="Tegner J."/>
            <person name="Teichmann S.A."/>
            <person name="Ueda H.R."/>
            <person name="van Nimwegen E."/>
            <person name="Verardo R."/>
            <person name="Wei C.L."/>
            <person name="Yagi K."/>
            <person name="Yamanishi H."/>
            <person name="Zabarovsky E."/>
            <person name="Zhu S."/>
            <person name="Zimmer A."/>
            <person name="Hide W."/>
            <person name="Bult C."/>
            <person name="Grimmond S.M."/>
            <person name="Teasdale R.D."/>
            <person name="Liu E.T."/>
            <person name="Brusic V."/>
            <person name="Quackenbush J."/>
            <person name="Wahlestedt C."/>
            <person name="Mattick J.S."/>
            <person name="Hume D.A."/>
            <person name="Kai C."/>
            <person name="Sasaki D."/>
            <person name="Tomaru Y."/>
            <person name="Fukuda S."/>
            <person name="Kanamori-Katayama M."/>
            <person name="Suzuki M."/>
            <person name="Aoki J."/>
            <person name="Arakawa T."/>
            <person name="Iida J."/>
            <person name="Imamura K."/>
            <person name="Itoh M."/>
            <person name="Kato T."/>
            <person name="Kawaji H."/>
            <person name="Kawagashira N."/>
            <person name="Kawashima T."/>
            <person name="Kojima M."/>
            <person name="Kondo S."/>
            <person name="Konno H."/>
            <person name="Nakano K."/>
            <person name="Ninomiya N."/>
            <person name="Nishio T."/>
            <person name="Okada M."/>
            <person name="Plessy C."/>
            <person name="Shibata K."/>
            <person name="Shiraki T."/>
            <person name="Suzuki S."/>
            <person name="Tagami M."/>
            <person name="Waki K."/>
            <person name="Watahiki A."/>
            <person name="Okamura-Oho Y."/>
            <person name="Suzuki H."/>
            <person name="Kawai J."/>
            <person name="Hayashizaki Y."/>
        </authorList>
    </citation>
    <scope>NUCLEOTIDE SEQUENCE [LARGE SCALE MRNA]</scope>
    <source>
        <strain>C57BL/6J</strain>
        <tissue>Aorta</tissue>
        <tissue>Head</tissue>
    </source>
</reference>
<reference key="2">
    <citation type="journal article" date="2007" name="Mol. Cell. Proteomics">
        <title>Mitochondrial phosphoproteome revealed by an improved IMAC method and MS/MS/MS.</title>
        <authorList>
            <person name="Lee J."/>
            <person name="Xu Y."/>
            <person name="Chen Y."/>
            <person name="Sprung R."/>
            <person name="Kim S.C."/>
            <person name="Xie S."/>
            <person name="Zhao Y."/>
        </authorList>
    </citation>
    <scope>PHOSPHORYLATION [LARGE SCALE ANALYSIS] AT SER-21</scope>
    <scope>IDENTIFICATION BY MASS SPECTROMETRY [LARGE SCALE ANALYSIS]</scope>
    <source>
        <tissue>Liver</tissue>
    </source>
</reference>
<reference key="3">
    <citation type="journal article" date="2008" name="J. Proteome Res.">
        <title>Specific phosphopeptide enrichment with immobilized titanium ion affinity chromatography adsorbent for phosphoproteome analysis.</title>
        <authorList>
            <person name="Zhou H."/>
            <person name="Ye M."/>
            <person name="Dong J."/>
            <person name="Han G."/>
            <person name="Jiang X."/>
            <person name="Wu R."/>
            <person name="Zou H."/>
        </authorList>
    </citation>
    <scope>PHOSPHORYLATION [LARGE SCALE ANALYSIS] AT SER-21</scope>
    <scope>IDENTIFICATION BY MASS SPECTROMETRY [LARGE SCALE ANALYSIS]</scope>
    <source>
        <tissue>Liver</tissue>
    </source>
</reference>
<reference key="4">
    <citation type="journal article" date="2019" name="Drug Metab. Dispos.">
        <title>Fexofenadine and Rosuvastatin Pharmacokinetics in Mice with Targeted Disruption of Organic Anion Transporting Polypeptide 2B1.</title>
        <authorList>
            <person name="Medwid S."/>
            <person name="Li M.M.J."/>
            <person name="Knauer M.J."/>
            <person name="Lin K."/>
            <person name="Mansell S.E."/>
            <person name="Schmerk C.L."/>
            <person name="Zhu C."/>
            <person name="Griffin K.E."/>
            <person name="Yousif M.D."/>
            <person name="Dresser G.K."/>
            <person name="Schwarz U.I."/>
            <person name="Kim R.B."/>
            <person name="Tirona R.G."/>
        </authorList>
    </citation>
    <scope>FUNCTION</scope>
    <scope>TISSUE SPECIFICITY</scope>
    <scope>DISRUPTION PHENOTYPE</scope>
</reference>
<reference key="5">
    <citation type="journal article" date="2020" name="Drug Metab. Dispos.">
        <title>Role of Oatp2b1 in Drug Absorption and Drug-Drug Interactions.</title>
        <authorList>
            <person name="Chen M."/>
            <person name="Hu S."/>
            <person name="Li Y."/>
            <person name="Gibson A.A."/>
            <person name="Fu Q."/>
            <person name="Baker S.D."/>
            <person name="Sparreboom A."/>
        </authorList>
    </citation>
    <scope>TISSUE SPECIFICITY</scope>
    <scope>DISRUPTION PHENOTYPE</scope>
</reference>
<reference key="6">
    <citation type="journal article" date="2021" name="Pharmaceutics">
        <title>Imaging-Based Characterization of a Slco2b1(-/-) Mouse Model Using [11C]Erlotinib and [99mTc]Mebrofenin as Probe Substrates.</title>
        <authorList>
            <person name="Marie S."/>
            <person name="Hernandez-Lozano I."/>
            <person name="Breuil L."/>
            <person name="Truillet C."/>
            <person name="Hu S."/>
            <person name="Sparreboom A."/>
            <person name="Tournier N."/>
            <person name="Langer O."/>
        </authorList>
    </citation>
    <scope>DISRUPTION PHENOTYPE</scope>
</reference>
<reference key="7">
    <citation type="journal article" date="2010" name="Cell">
        <title>A tissue-specific atlas of mouse protein phosphorylation and expression.</title>
        <authorList>
            <person name="Huttlin E.L."/>
            <person name="Jedrychowski M.P."/>
            <person name="Elias J.E."/>
            <person name="Goswami T."/>
            <person name="Rad R."/>
            <person name="Beausoleil S.A."/>
            <person name="Villen J."/>
            <person name="Haas W."/>
            <person name="Sowa M.E."/>
            <person name="Gygi S.P."/>
        </authorList>
    </citation>
    <scope>IDENTIFICATION BY MASS SPECTROMETRY [LARGE SCALE ANALYSIS]</scope>
    <source>
        <tissue>Liver</tissue>
    </source>
</reference>
<sequence length="683" mass="74531">MPDRSTKTTMGTEDMHERKVSVEPQDSHQDAQPRGMFHNIKFFVLCHSLLQLTQLMISGYLKSSISTVEKRFGLSSQISGLLAAFNEVGNVSLILFVSYFGSRVHRPRMIGYGALLVATAGLLMALPHFISEPYRYDHSSSDNRSLDFEASLCLPTTMAPASALSNGSCSSHTETKHLTMVGIMFAAQTLLGIGGVPIQPFGISYIDDFAHHSNSPLYIGILFGITTMGPGLAYGLGSLMLRLYVDIDRMPEGGINLTPKDPRWVGAWWLGFLISSGLVVLASSPYFFFPREMPKEKHEFHFRRKVLASAASTASKGEDLSSQHEPLKKQAGLAQIAPDLTLVQFVKVFPRVLLRNLRHPIFLLVVLSQVCTSSMVAGMATFLPKFLERQFSITASFANMLLGCLTIPLVIVGIMMGGVLVKRLHLSPVQCSALCLLGSLLCLLFSVPLFFIGCSTHQIAGITQDLGAQPGPSLFPGCSEPCSCQSDDFNPVCDTSAYVEYTTPCHAGCTGRVVQEALGKSQVFYTNCSCVAGNGTVPAGSCESACSRLVLPFIVLFSLGAGLASITHTPSFMLILRGVKKEDKTLAVGMQFMLLRVLAWMPSPVIHGSAIDTTCVHWALTCGRRAVCRYYDHDLLRNRFIGLQFFFKSGSLVCFTLVLAILRQQSREASTRTTVKSSELQQL</sequence>
<proteinExistence type="evidence at protein level"/>
<comment type="function">
    <text evidence="1 6">Mediates the Na(+)-independent transport of steroid sulfate conjugates such as estrone 3-sulfate (E1S), dehydroepiandrosterone sulfate (DHEA-S) and pregnenolone sulfate (PregS) and other specific organic anions (PubMed:31123035). Responsible for the transport of E1S through the basal membrane of syncytiotrophoblast, highlighting a potential role in the placental absorption of fetal-derived sulfated steroids including DHEA-S (By similarity). Also facilitates the uptake of sulfated steroids at the basal/sinusoidal membrane of hepatocytes, therefore accounting for the major part of organic anions clearance of liver. Mediates the intestinal uptake of sulfated steroids. Mediates the uptake of the neurosteroids DHEA-S and PregS into the endothelial cells of the blood-brain barrier as the first step to enter the brain. Also plays a role in the reuptake of neuropeptides such as substance P/TAC1 and vasoactive intestinal peptide/VIP released from retinal neurons. May act as a heme transporter that promotes cellular iron availability. Also transports heme by-product coproporphyrin III (CPIII), and may be involved in their hepatic disposition (By similarity). Mediates the uptake of other substrates such as prostaglandins D2 (PGD2), E1 (PGE1) and E2 (PGE2), taurocholate, L-thyroxine, leukotriene C4 and thromboxane B2 (PubMed:31123035). May contribute to regulate the transport of organic compounds in testis across the blood-testis-barrier (By similarity). Shows a pH-sensitive substrate specificity which may be ascribed to the protonation state of the binding site and leads to a stimulation of substrate transport in an acidic microenvironment. The exact transport mechanism has not been yet deciphered but most likely involves an anion exchange, coupling the cellular uptake of organic substrate with the efflux of an anionic compound. Hydrogencarbonate/HCO3(-) acts as a probable counteranion that exchanges for organic anions. Cytoplasmic glutamate may also act as counteranion in the placenta. An inwardly directed proton gradient has also been proposed as the driving force of E1S uptake with a (H(+):E1S) stoichiometry of (1:1) (By similarity).</text>
</comment>
<comment type="catalytic activity">
    <reaction evidence="11">
        <text>dehydroepiandrosterone 3-sulfate(out) = dehydroepiandrosterone 3-sulfate(in)</text>
        <dbReference type="Rhea" id="RHEA:71839"/>
        <dbReference type="ChEBI" id="CHEBI:57905"/>
    </reaction>
</comment>
<comment type="catalytic activity">
    <reaction evidence="11">
        <text>estrone 3-sulfate(out) = estrone 3-sulfate(in)</text>
        <dbReference type="Rhea" id="RHEA:71835"/>
        <dbReference type="ChEBI" id="CHEBI:60050"/>
    </reaction>
</comment>
<comment type="catalytic activity">
    <reaction evidence="1">
        <text>estrone 3-sulfate(out) + hydrogencarbonate(in) = estrone 3-sulfate(in) + hydrogencarbonate(out)</text>
        <dbReference type="Rhea" id="RHEA:73055"/>
        <dbReference type="ChEBI" id="CHEBI:17544"/>
        <dbReference type="ChEBI" id="CHEBI:60050"/>
    </reaction>
</comment>
<comment type="catalytic activity">
    <reaction evidence="11">
        <text>taurocholate(out) = taurocholate(in)</text>
        <dbReference type="Rhea" id="RHEA:71703"/>
        <dbReference type="ChEBI" id="CHEBI:36257"/>
    </reaction>
</comment>
<comment type="catalytic activity">
    <reaction evidence="1">
        <text>coproporphyrin III(out) = coproporphyrin III(in)</text>
        <dbReference type="Rhea" id="RHEA:74363"/>
        <dbReference type="ChEBI" id="CHEBI:131725"/>
    </reaction>
</comment>
<comment type="catalytic activity">
    <reaction evidence="1">
        <text>substance P(out) = substance P(in)</text>
        <dbReference type="Rhea" id="RHEA:74367"/>
        <dbReference type="ChEBI" id="CHEBI:190692"/>
    </reaction>
</comment>
<comment type="catalytic activity">
    <reaction evidence="1">
        <text>pregnenolone sulfate(out) = pregnenolone sulfate(in)</text>
        <dbReference type="Rhea" id="RHEA:73023"/>
        <dbReference type="ChEBI" id="CHEBI:133000"/>
    </reaction>
</comment>
<comment type="catalytic activity">
    <reaction evidence="1">
        <text>prostaglandin E2(out) = prostaglandin E2(in)</text>
        <dbReference type="Rhea" id="RHEA:50984"/>
        <dbReference type="ChEBI" id="CHEBI:606564"/>
    </reaction>
</comment>
<comment type="catalytic activity">
    <reaction evidence="2">
        <text>prostaglandin D2(out) = prostaglandin D2(in)</text>
        <dbReference type="Rhea" id="RHEA:50976"/>
        <dbReference type="ChEBI" id="CHEBI:57406"/>
    </reaction>
</comment>
<comment type="catalytic activity">
    <reaction evidence="1">
        <text>L-thyroxine(out) = L-thyroxine(in)</text>
        <dbReference type="Rhea" id="RHEA:71819"/>
        <dbReference type="ChEBI" id="CHEBI:58448"/>
    </reaction>
</comment>
<comment type="subcellular location">
    <subcellularLocation>
        <location evidence="1">Cell membrane</location>
        <topology evidence="10">Multi-pass membrane protein</topology>
    </subcellularLocation>
    <subcellularLocation>
        <location evidence="1">Basal cell membrane</location>
        <topology evidence="10">Multi-pass membrane protein</topology>
    </subcellularLocation>
    <subcellularLocation>
        <location evidence="1">Apical cell membrane</location>
        <topology evidence="10">Multi-pass membrane protein</topology>
    </subcellularLocation>
</comment>
<comment type="tissue specificity">
    <text evidence="6 7">Expressed in liver, kidney, small intestine mucosa, large intestine, brain, lung, spleen, stomach and heart.</text>
</comment>
<comment type="domain">
    <text evidence="1">A conserved histidine residue in the third transmembrane domain (His-128) might play an essential role in the pH sensitivity of SLCO2B1/OATP2B1-mediated substrate transport. Transmembrane domain 1 (TM1) may be localized within the substrate binding pocket.</text>
</comment>
<comment type="disruption phenotype">
    <text evidence="6 7 8">Knockout mice show no difference in growth rate, viability, fertility, progeny, life span, weight, organs, tissues and serum biochemistry (PubMed:31123035). Knockout females exhibit an increased in Cyp2c65 and Cyp2c66 gene expression, but not males (PubMed:32114507). Knockout mice exhibit a decreased plasma concentration of certain drugs administered orally such as fexofenadine and fluvastatin, whereas no difference were observed after intravenous administration (PubMed:31123035, PubMed:32114507). Also exhibit a decreased in the hepatic uptake of drugs erlotinib and mebrofenin after intravenous injection (PubMed:34205780). Don't show any difference in fluvastatin liver concentration after oral injection (PubMed:32114507).</text>
</comment>
<comment type="miscellaneous">
    <text evidence="6 7 8">Most likely contributes to the absorption and the disposition of a wide range of drugs in the intestine and the liver.</text>
</comment>
<comment type="similarity">
    <text evidence="10">Belongs to the organo anion transporter (TC 2.A.60) family.</text>
</comment>
<keyword id="KW-1003">Cell membrane</keyword>
<keyword id="KW-1015">Disulfide bond</keyword>
<keyword id="KW-0325">Glycoprotein</keyword>
<keyword id="KW-0406">Ion transport</keyword>
<keyword id="KW-0472">Membrane</keyword>
<keyword id="KW-0597">Phosphoprotein</keyword>
<keyword id="KW-1185">Reference proteome</keyword>
<keyword id="KW-0812">Transmembrane</keyword>
<keyword id="KW-1133">Transmembrane helix</keyword>
<keyword id="KW-0813">Transport</keyword>
<gene>
    <name evidence="12" type="primary">Slco2b1</name>
    <name evidence="9" type="synonym">Oatp2b1</name>
    <name evidence="1" type="synonym">Slc21a9</name>
</gene>
<dbReference type="EMBL" id="AK041144">
    <property type="protein sequence ID" value="BAC30838.1"/>
    <property type="molecule type" value="mRNA"/>
</dbReference>
<dbReference type="EMBL" id="AK048120">
    <property type="protein sequence ID" value="BAC33248.1"/>
    <property type="molecule type" value="mRNA"/>
</dbReference>
<dbReference type="CCDS" id="CCDS21485.1"/>
<dbReference type="RefSeq" id="NP_001239459.1">
    <property type="nucleotide sequence ID" value="NM_001252530.1"/>
</dbReference>
<dbReference type="RefSeq" id="NP_001239460.1">
    <property type="nucleotide sequence ID" value="NM_001252531.2"/>
</dbReference>
<dbReference type="RefSeq" id="NP_780525.1">
    <property type="nucleotide sequence ID" value="NM_175316.3"/>
</dbReference>
<dbReference type="RefSeq" id="XP_011239942.1">
    <property type="nucleotide sequence ID" value="XM_011241640.4"/>
</dbReference>
<dbReference type="RefSeq" id="XP_011239943.1">
    <property type="nucleotide sequence ID" value="XM_011241641.4"/>
</dbReference>
<dbReference type="SMR" id="Q8BXB6"/>
<dbReference type="FunCoup" id="Q8BXB6">
    <property type="interactions" value="596"/>
</dbReference>
<dbReference type="STRING" id="10090.ENSMUSP00000102703"/>
<dbReference type="GlyCosmos" id="Q8BXB6">
    <property type="glycosylation" value="4 sites, No reported glycans"/>
</dbReference>
<dbReference type="GlyGen" id="Q8BXB6">
    <property type="glycosylation" value="4 sites"/>
</dbReference>
<dbReference type="iPTMnet" id="Q8BXB6"/>
<dbReference type="PhosphoSitePlus" id="Q8BXB6"/>
<dbReference type="SwissPalm" id="Q8BXB6"/>
<dbReference type="jPOST" id="Q8BXB6"/>
<dbReference type="PaxDb" id="10090-ENSMUSP00000032985"/>
<dbReference type="ProteomicsDB" id="261105"/>
<dbReference type="Antibodypedia" id="17309">
    <property type="antibodies" value="94 antibodies from 18 providers"/>
</dbReference>
<dbReference type="DNASU" id="101488"/>
<dbReference type="Ensembl" id="ENSMUST00000032985.11">
    <property type="protein sequence ID" value="ENSMUSP00000032985.5"/>
    <property type="gene ID" value="ENSMUSG00000030737.18"/>
</dbReference>
<dbReference type="Ensembl" id="ENSMUST00000107086.9">
    <property type="protein sequence ID" value="ENSMUSP00000102701.3"/>
    <property type="gene ID" value="ENSMUSG00000030737.18"/>
</dbReference>
<dbReference type="GeneID" id="101488"/>
<dbReference type="KEGG" id="mmu:101488"/>
<dbReference type="UCSC" id="uc009ilw.2">
    <property type="organism name" value="mouse"/>
</dbReference>
<dbReference type="AGR" id="MGI:1351872"/>
<dbReference type="CTD" id="11309"/>
<dbReference type="MGI" id="MGI:1351872">
    <property type="gene designation" value="Slco2b1"/>
</dbReference>
<dbReference type="VEuPathDB" id="HostDB:ENSMUSG00000030737"/>
<dbReference type="eggNOG" id="KOG3626">
    <property type="taxonomic scope" value="Eukaryota"/>
</dbReference>
<dbReference type="GeneTree" id="ENSGT01130000278312"/>
<dbReference type="HOGENOM" id="CLU_008954_4_1_1"/>
<dbReference type="InParanoid" id="Q8BXB6"/>
<dbReference type="OMA" id="FMLGSAM"/>
<dbReference type="OrthoDB" id="5062115at2759"/>
<dbReference type="TreeFam" id="TF317540"/>
<dbReference type="Reactome" id="R-MMU-189483">
    <property type="pathway name" value="Heme degradation"/>
</dbReference>
<dbReference type="Reactome" id="R-MMU-879518">
    <property type="pathway name" value="Transport of organic anions"/>
</dbReference>
<dbReference type="Reactome" id="R-MMU-9749641">
    <property type="pathway name" value="Aspirin ADME"/>
</dbReference>
<dbReference type="Reactome" id="R-MMU-9754706">
    <property type="pathway name" value="Atorvastatin ADME"/>
</dbReference>
<dbReference type="BioGRID-ORCS" id="101488">
    <property type="hits" value="5 hits in 77 CRISPR screens"/>
</dbReference>
<dbReference type="ChiTaRS" id="Slco2b1">
    <property type="organism name" value="mouse"/>
</dbReference>
<dbReference type="PRO" id="PR:Q8BXB6"/>
<dbReference type="Proteomes" id="UP000000589">
    <property type="component" value="Chromosome 7"/>
</dbReference>
<dbReference type="RNAct" id="Q8BXB6">
    <property type="molecule type" value="protein"/>
</dbReference>
<dbReference type="Bgee" id="ENSMUSG00000030737">
    <property type="expression patterns" value="Expressed in brain blood vessel and 189 other cell types or tissues"/>
</dbReference>
<dbReference type="ExpressionAtlas" id="Q8BXB6">
    <property type="expression patterns" value="baseline and differential"/>
</dbReference>
<dbReference type="GO" id="GO:0016324">
    <property type="term" value="C:apical plasma membrane"/>
    <property type="evidence" value="ECO:0007669"/>
    <property type="project" value="UniProtKB-SubCell"/>
</dbReference>
<dbReference type="GO" id="GO:0009925">
    <property type="term" value="C:basal plasma membrane"/>
    <property type="evidence" value="ECO:0000250"/>
    <property type="project" value="UniProtKB"/>
</dbReference>
<dbReference type="GO" id="GO:0005886">
    <property type="term" value="C:plasma membrane"/>
    <property type="evidence" value="ECO:0000314"/>
    <property type="project" value="MGI"/>
</dbReference>
<dbReference type="GO" id="GO:0008514">
    <property type="term" value="F:organic anion transmembrane transporter activity"/>
    <property type="evidence" value="ECO:0000315"/>
    <property type="project" value="UniProtKB"/>
</dbReference>
<dbReference type="GO" id="GO:0008283">
    <property type="term" value="P:cell population proliferation"/>
    <property type="evidence" value="ECO:0000314"/>
    <property type="project" value="MGI"/>
</dbReference>
<dbReference type="GO" id="GO:0010106">
    <property type="term" value="P:cellular response to iron ion starvation"/>
    <property type="evidence" value="ECO:0000315"/>
    <property type="project" value="MGI"/>
</dbReference>
<dbReference type="GO" id="GO:0140420">
    <property type="term" value="P:heme import into cell"/>
    <property type="evidence" value="ECO:0000315"/>
    <property type="project" value="MGI"/>
</dbReference>
<dbReference type="GO" id="GO:0010496">
    <property type="term" value="P:intercellular transport"/>
    <property type="evidence" value="ECO:0000315"/>
    <property type="project" value="MGI"/>
</dbReference>
<dbReference type="GO" id="GO:0006879">
    <property type="term" value="P:intracellular iron ion homeostasis"/>
    <property type="evidence" value="ECO:0000315"/>
    <property type="project" value="MGI"/>
</dbReference>
<dbReference type="GO" id="GO:0015711">
    <property type="term" value="P:organic anion transport"/>
    <property type="evidence" value="ECO:0000266"/>
    <property type="project" value="MGI"/>
</dbReference>
<dbReference type="GO" id="GO:0042908">
    <property type="term" value="P:xenobiotic transport"/>
    <property type="evidence" value="ECO:0000315"/>
    <property type="project" value="MGI"/>
</dbReference>
<dbReference type="Gene3D" id="1.20.1250.20">
    <property type="entry name" value="MFS general substrate transporter like domains"/>
    <property type="match status" value="1"/>
</dbReference>
<dbReference type="InterPro" id="IPR002350">
    <property type="entry name" value="Kazal_dom"/>
</dbReference>
<dbReference type="InterPro" id="IPR036259">
    <property type="entry name" value="MFS_trans_sf"/>
</dbReference>
<dbReference type="InterPro" id="IPR004156">
    <property type="entry name" value="OATP"/>
</dbReference>
<dbReference type="NCBIfam" id="TIGR00805">
    <property type="entry name" value="oat"/>
    <property type="match status" value="1"/>
</dbReference>
<dbReference type="PANTHER" id="PTHR11388">
    <property type="entry name" value="ORGANIC ANION TRANSPORTER"/>
    <property type="match status" value="1"/>
</dbReference>
<dbReference type="PANTHER" id="PTHR11388:SF87">
    <property type="entry name" value="SOLUTE CARRIER ORGANIC ANION TRANSPORTER FAMILY MEMBER 2B1"/>
    <property type="match status" value="1"/>
</dbReference>
<dbReference type="Pfam" id="PF03137">
    <property type="entry name" value="OATP"/>
    <property type="match status" value="1"/>
</dbReference>
<dbReference type="SUPFAM" id="SSF103473">
    <property type="entry name" value="MFS general substrate transporter"/>
    <property type="match status" value="1"/>
</dbReference>
<dbReference type="PROSITE" id="PS51465">
    <property type="entry name" value="KAZAL_2"/>
    <property type="match status" value="1"/>
</dbReference>